<comment type="function">
    <text evidence="1">Catalyzes the cyclization of GTP to (8S)-3',8-cyclo-7,8-dihydroguanosine 5'-triphosphate.</text>
</comment>
<comment type="catalytic activity">
    <reaction evidence="1">
        <text>GTP + AH2 + S-adenosyl-L-methionine = (8S)-3',8-cyclo-7,8-dihydroguanosine 5'-triphosphate + 5'-deoxyadenosine + L-methionine + A + H(+)</text>
        <dbReference type="Rhea" id="RHEA:49576"/>
        <dbReference type="ChEBI" id="CHEBI:13193"/>
        <dbReference type="ChEBI" id="CHEBI:15378"/>
        <dbReference type="ChEBI" id="CHEBI:17319"/>
        <dbReference type="ChEBI" id="CHEBI:17499"/>
        <dbReference type="ChEBI" id="CHEBI:37565"/>
        <dbReference type="ChEBI" id="CHEBI:57844"/>
        <dbReference type="ChEBI" id="CHEBI:59789"/>
        <dbReference type="ChEBI" id="CHEBI:131766"/>
        <dbReference type="EC" id="4.1.99.22"/>
    </reaction>
</comment>
<comment type="cofactor">
    <cofactor evidence="1">
        <name>[4Fe-4S] cluster</name>
        <dbReference type="ChEBI" id="CHEBI:49883"/>
    </cofactor>
    <text evidence="1">Binds 2 [4Fe-4S] clusters. Binds 1 [4Fe-4S] cluster coordinated with 3 cysteines and an exchangeable S-adenosyl-L-methionine and 1 [4Fe-4S] cluster coordinated with 3 cysteines and the GTP-derived substrate.</text>
</comment>
<comment type="pathway">
    <text evidence="1">Cofactor biosynthesis; molybdopterin biosynthesis.</text>
</comment>
<comment type="subunit">
    <text evidence="1">Monomer and homodimer.</text>
</comment>
<comment type="similarity">
    <text evidence="1">Belongs to the radical SAM superfamily. MoaA family.</text>
</comment>
<organism>
    <name type="scientific">Parasynechococcus marenigrum (strain WH8102)</name>
    <dbReference type="NCBI Taxonomy" id="84588"/>
    <lineage>
        <taxon>Bacteria</taxon>
        <taxon>Bacillati</taxon>
        <taxon>Cyanobacteriota</taxon>
        <taxon>Cyanophyceae</taxon>
        <taxon>Synechococcales</taxon>
        <taxon>Prochlorococcaceae</taxon>
        <taxon>Parasynechococcus</taxon>
        <taxon>Parasynechococcus marenigrum</taxon>
    </lineage>
</organism>
<sequence length="346" mass="37484">MTPASALVDQRSRPLRVLRLSLTARCNLACPYCCPDLEDPPDLLSLEQQLRLIRVACRLGIHSLRLTGGEPLLSARLLPLLQAIAAARATPGDPLQGLQQVALTTNGTLLSDQRACDLRQAGLDRITVSLDGVDGAVVARMAGRPTATAGDSLARKVLGGLASARSAGFDPLAGELKLNAVIQRGVNEDQLLPLADLARDQGVELRLIEYMDVGNRNQWRLDQVLSAAEMVTRIRARWPLQAVGRPTGGTAQRWRYVDGGGHLGVIASISEPFCGDCNRLRVTADGQAFRCLFASVGTDLKPALHCEAELLRLVADLWRRRDDRYSDERQQTTGSMPHAEMAYLGG</sequence>
<name>MOAA_PARMW</name>
<feature type="chain" id="PRO_1000054234" description="GTP 3',8-cyclase">
    <location>
        <begin position="1"/>
        <end position="346"/>
    </location>
</feature>
<feature type="domain" description="Radical SAM core" evidence="2">
    <location>
        <begin position="10"/>
        <end position="240"/>
    </location>
</feature>
<feature type="region of interest" description="Disordered" evidence="3">
    <location>
        <begin position="326"/>
        <end position="346"/>
    </location>
</feature>
<feature type="binding site" evidence="1">
    <location>
        <position position="19"/>
    </location>
    <ligand>
        <name>GTP</name>
        <dbReference type="ChEBI" id="CHEBI:37565"/>
    </ligand>
</feature>
<feature type="binding site" evidence="1">
    <location>
        <position position="26"/>
    </location>
    <ligand>
        <name>[4Fe-4S] cluster</name>
        <dbReference type="ChEBI" id="CHEBI:49883"/>
        <label>1</label>
        <note>4Fe-4S-S-AdoMet</note>
    </ligand>
</feature>
<feature type="binding site" evidence="1">
    <location>
        <position position="30"/>
    </location>
    <ligand>
        <name>[4Fe-4S] cluster</name>
        <dbReference type="ChEBI" id="CHEBI:49883"/>
        <label>1</label>
        <note>4Fe-4S-S-AdoMet</note>
    </ligand>
</feature>
<feature type="binding site" evidence="1">
    <location>
        <position position="32"/>
    </location>
    <ligand>
        <name>S-adenosyl-L-methionine</name>
        <dbReference type="ChEBI" id="CHEBI:59789"/>
    </ligand>
</feature>
<feature type="binding site" evidence="1">
    <location>
        <position position="33"/>
    </location>
    <ligand>
        <name>[4Fe-4S] cluster</name>
        <dbReference type="ChEBI" id="CHEBI:49883"/>
        <label>1</label>
        <note>4Fe-4S-S-AdoMet</note>
    </ligand>
</feature>
<feature type="binding site" evidence="1">
    <location>
        <position position="65"/>
    </location>
    <ligand>
        <name>GTP</name>
        <dbReference type="ChEBI" id="CHEBI:37565"/>
    </ligand>
</feature>
<feature type="binding site" evidence="1">
    <location>
        <position position="69"/>
    </location>
    <ligand>
        <name>S-adenosyl-L-methionine</name>
        <dbReference type="ChEBI" id="CHEBI:59789"/>
    </ligand>
</feature>
<feature type="binding site" evidence="1">
    <location>
        <position position="104"/>
    </location>
    <ligand>
        <name>GTP</name>
        <dbReference type="ChEBI" id="CHEBI:37565"/>
    </ligand>
</feature>
<feature type="binding site" evidence="1">
    <location>
        <position position="129"/>
    </location>
    <ligand>
        <name>S-adenosyl-L-methionine</name>
        <dbReference type="ChEBI" id="CHEBI:59789"/>
    </ligand>
</feature>
<feature type="binding site" evidence="1">
    <location>
        <position position="177"/>
    </location>
    <ligand>
        <name>GTP</name>
        <dbReference type="ChEBI" id="CHEBI:37565"/>
    </ligand>
</feature>
<feature type="binding site" evidence="1">
    <location>
        <position position="211"/>
    </location>
    <ligand>
        <name>S-adenosyl-L-methionine</name>
        <dbReference type="ChEBI" id="CHEBI:59789"/>
    </ligand>
</feature>
<feature type="binding site" evidence="1">
    <location>
        <position position="274"/>
    </location>
    <ligand>
        <name>[4Fe-4S] cluster</name>
        <dbReference type="ChEBI" id="CHEBI:49883"/>
        <label>2</label>
        <note>4Fe-4S-substrate</note>
    </ligand>
</feature>
<feature type="binding site" evidence="1">
    <location>
        <position position="277"/>
    </location>
    <ligand>
        <name>[4Fe-4S] cluster</name>
        <dbReference type="ChEBI" id="CHEBI:49883"/>
        <label>2</label>
        <note>4Fe-4S-substrate</note>
    </ligand>
</feature>
<feature type="binding site" evidence="1">
    <location>
        <begin position="279"/>
        <end position="281"/>
    </location>
    <ligand>
        <name>GTP</name>
        <dbReference type="ChEBI" id="CHEBI:37565"/>
    </ligand>
</feature>
<feature type="binding site" evidence="1">
    <location>
        <position position="291"/>
    </location>
    <ligand>
        <name>[4Fe-4S] cluster</name>
        <dbReference type="ChEBI" id="CHEBI:49883"/>
        <label>2</label>
        <note>4Fe-4S-substrate</note>
    </ligand>
</feature>
<evidence type="ECO:0000255" key="1">
    <source>
        <dbReference type="HAMAP-Rule" id="MF_01225"/>
    </source>
</evidence>
<evidence type="ECO:0000255" key="2">
    <source>
        <dbReference type="PROSITE-ProRule" id="PRU01266"/>
    </source>
</evidence>
<evidence type="ECO:0000256" key="3">
    <source>
        <dbReference type="SAM" id="MobiDB-lite"/>
    </source>
</evidence>
<gene>
    <name evidence="1" type="primary">moaA</name>
    <name type="ordered locus">SYNW2460</name>
</gene>
<proteinExistence type="inferred from homology"/>
<protein>
    <recommendedName>
        <fullName evidence="1">GTP 3',8-cyclase</fullName>
        <ecNumber evidence="1">4.1.99.22</ecNumber>
    </recommendedName>
    <alternativeName>
        <fullName evidence="1">Molybdenum cofactor biosynthesis protein A</fullName>
    </alternativeName>
</protein>
<accession>Q7U3H2</accession>
<dbReference type="EC" id="4.1.99.22" evidence="1"/>
<dbReference type="EMBL" id="BX569695">
    <property type="protein sequence ID" value="CAE08975.1"/>
    <property type="molecule type" value="Genomic_DNA"/>
</dbReference>
<dbReference type="RefSeq" id="WP_011129313.1">
    <property type="nucleotide sequence ID" value="NC_005070.1"/>
</dbReference>
<dbReference type="SMR" id="Q7U3H2"/>
<dbReference type="STRING" id="84588.SYNW2460"/>
<dbReference type="KEGG" id="syw:SYNW2460"/>
<dbReference type="eggNOG" id="COG2896">
    <property type="taxonomic scope" value="Bacteria"/>
</dbReference>
<dbReference type="HOGENOM" id="CLU_009273_0_1_3"/>
<dbReference type="UniPathway" id="UPA00344"/>
<dbReference type="Proteomes" id="UP000001422">
    <property type="component" value="Chromosome"/>
</dbReference>
<dbReference type="GO" id="GO:0051539">
    <property type="term" value="F:4 iron, 4 sulfur cluster binding"/>
    <property type="evidence" value="ECO:0007669"/>
    <property type="project" value="UniProtKB-UniRule"/>
</dbReference>
<dbReference type="GO" id="GO:0061799">
    <property type="term" value="F:cyclic pyranopterin monophosphate synthase activity"/>
    <property type="evidence" value="ECO:0007669"/>
    <property type="project" value="TreeGrafter"/>
</dbReference>
<dbReference type="GO" id="GO:0061798">
    <property type="term" value="F:GTP 3',8'-cyclase activity"/>
    <property type="evidence" value="ECO:0007669"/>
    <property type="project" value="UniProtKB-UniRule"/>
</dbReference>
<dbReference type="GO" id="GO:0005525">
    <property type="term" value="F:GTP binding"/>
    <property type="evidence" value="ECO:0007669"/>
    <property type="project" value="UniProtKB-UniRule"/>
</dbReference>
<dbReference type="GO" id="GO:0046872">
    <property type="term" value="F:metal ion binding"/>
    <property type="evidence" value="ECO:0007669"/>
    <property type="project" value="UniProtKB-KW"/>
</dbReference>
<dbReference type="GO" id="GO:1904047">
    <property type="term" value="F:S-adenosyl-L-methionine binding"/>
    <property type="evidence" value="ECO:0007669"/>
    <property type="project" value="UniProtKB-UniRule"/>
</dbReference>
<dbReference type="GO" id="GO:0006777">
    <property type="term" value="P:Mo-molybdopterin cofactor biosynthetic process"/>
    <property type="evidence" value="ECO:0007669"/>
    <property type="project" value="UniProtKB-UniRule"/>
</dbReference>
<dbReference type="CDD" id="cd01335">
    <property type="entry name" value="Radical_SAM"/>
    <property type="match status" value="1"/>
</dbReference>
<dbReference type="CDD" id="cd21117">
    <property type="entry name" value="Twitch_MoaA"/>
    <property type="match status" value="1"/>
</dbReference>
<dbReference type="Gene3D" id="3.20.20.70">
    <property type="entry name" value="Aldolase class I"/>
    <property type="match status" value="1"/>
</dbReference>
<dbReference type="HAMAP" id="MF_01225_B">
    <property type="entry name" value="MoaA_B"/>
    <property type="match status" value="1"/>
</dbReference>
<dbReference type="InterPro" id="IPR013785">
    <property type="entry name" value="Aldolase_TIM"/>
</dbReference>
<dbReference type="InterPro" id="IPR013483">
    <property type="entry name" value="MoaA"/>
</dbReference>
<dbReference type="InterPro" id="IPR010505">
    <property type="entry name" value="MoaA_twitch"/>
</dbReference>
<dbReference type="InterPro" id="IPR050105">
    <property type="entry name" value="MoCo_biosynth_MoaA/MoaC"/>
</dbReference>
<dbReference type="InterPro" id="IPR007197">
    <property type="entry name" value="rSAM"/>
</dbReference>
<dbReference type="PANTHER" id="PTHR22960:SF0">
    <property type="entry name" value="MOLYBDENUM COFACTOR BIOSYNTHESIS PROTEIN 1"/>
    <property type="match status" value="1"/>
</dbReference>
<dbReference type="PANTHER" id="PTHR22960">
    <property type="entry name" value="MOLYBDOPTERIN COFACTOR SYNTHESIS PROTEIN A"/>
    <property type="match status" value="1"/>
</dbReference>
<dbReference type="Pfam" id="PF06463">
    <property type="entry name" value="Mob_synth_C"/>
    <property type="match status" value="1"/>
</dbReference>
<dbReference type="Pfam" id="PF04055">
    <property type="entry name" value="Radical_SAM"/>
    <property type="match status" value="1"/>
</dbReference>
<dbReference type="SFLD" id="SFLDG01383">
    <property type="entry name" value="cyclic_pyranopterin_phosphate"/>
    <property type="match status" value="1"/>
</dbReference>
<dbReference type="SFLD" id="SFLDS00029">
    <property type="entry name" value="Radical_SAM"/>
    <property type="match status" value="1"/>
</dbReference>
<dbReference type="SUPFAM" id="SSF102114">
    <property type="entry name" value="Radical SAM enzymes"/>
    <property type="match status" value="1"/>
</dbReference>
<dbReference type="PROSITE" id="PS51918">
    <property type="entry name" value="RADICAL_SAM"/>
    <property type="match status" value="1"/>
</dbReference>
<keyword id="KW-0004">4Fe-4S</keyword>
<keyword id="KW-0342">GTP-binding</keyword>
<keyword id="KW-0408">Iron</keyword>
<keyword id="KW-0411">Iron-sulfur</keyword>
<keyword id="KW-0456">Lyase</keyword>
<keyword id="KW-0479">Metal-binding</keyword>
<keyword id="KW-0501">Molybdenum cofactor biosynthesis</keyword>
<keyword id="KW-0547">Nucleotide-binding</keyword>
<keyword id="KW-0949">S-adenosyl-L-methionine</keyword>
<reference key="1">
    <citation type="journal article" date="2003" name="Nature">
        <title>The genome of a motile marine Synechococcus.</title>
        <authorList>
            <person name="Palenik B."/>
            <person name="Brahamsha B."/>
            <person name="Larimer F.W."/>
            <person name="Land M.L."/>
            <person name="Hauser L."/>
            <person name="Chain P."/>
            <person name="Lamerdin J.E."/>
            <person name="Regala W."/>
            <person name="Allen E.E."/>
            <person name="McCarren J."/>
            <person name="Paulsen I.T."/>
            <person name="Dufresne A."/>
            <person name="Partensky F."/>
            <person name="Webb E.A."/>
            <person name="Waterbury J."/>
        </authorList>
    </citation>
    <scope>NUCLEOTIDE SEQUENCE [LARGE SCALE GENOMIC DNA]</scope>
    <source>
        <strain>WH8102</strain>
    </source>
</reference>